<dbReference type="EC" id="3.1.3.16"/>
<dbReference type="EMBL" id="M60215">
    <property type="protein sequence ID" value="AAA33545.1"/>
    <property type="molecule type" value="mRNA"/>
</dbReference>
<dbReference type="PIR" id="S29317">
    <property type="entry name" value="S29317"/>
</dbReference>
<dbReference type="RefSeq" id="NP_001105341.1">
    <property type="nucleotide sequence ID" value="NM_001111871.1"/>
</dbReference>
<dbReference type="SMR" id="P22198"/>
<dbReference type="FunCoup" id="P22198">
    <property type="interactions" value="2314"/>
</dbReference>
<dbReference type="STRING" id="4577.P22198"/>
<dbReference type="PaxDb" id="4577-GRMZM2G112240_P02"/>
<dbReference type="EnsemblPlants" id="Zm00001eb191230_T001">
    <property type="protein sequence ID" value="Zm00001eb191230_P001"/>
    <property type="gene ID" value="Zm00001eb191230"/>
</dbReference>
<dbReference type="GeneID" id="542269"/>
<dbReference type="Gramene" id="Zm00001eb191230_T001">
    <property type="protein sequence ID" value="Zm00001eb191230_P001"/>
    <property type="gene ID" value="Zm00001eb191230"/>
</dbReference>
<dbReference type="KEGG" id="zma:542269"/>
<dbReference type="MaizeGDB" id="30136"/>
<dbReference type="eggNOG" id="KOG0374">
    <property type="taxonomic scope" value="Eukaryota"/>
</dbReference>
<dbReference type="HOGENOM" id="CLU_004962_0_0_1"/>
<dbReference type="InParanoid" id="P22198"/>
<dbReference type="OrthoDB" id="1930084at2759"/>
<dbReference type="Proteomes" id="UP000007305">
    <property type="component" value="Chromosome 4"/>
</dbReference>
<dbReference type="ExpressionAtlas" id="P22198">
    <property type="expression patterns" value="baseline and differential"/>
</dbReference>
<dbReference type="GO" id="GO:0005737">
    <property type="term" value="C:cytoplasm"/>
    <property type="evidence" value="ECO:0000318"/>
    <property type="project" value="GO_Central"/>
</dbReference>
<dbReference type="GO" id="GO:0005634">
    <property type="term" value="C:nucleus"/>
    <property type="evidence" value="ECO:0000318"/>
    <property type="project" value="GO_Central"/>
</dbReference>
<dbReference type="GO" id="GO:0046872">
    <property type="term" value="F:metal ion binding"/>
    <property type="evidence" value="ECO:0007669"/>
    <property type="project" value="UniProtKB-KW"/>
</dbReference>
<dbReference type="GO" id="GO:0004722">
    <property type="term" value="F:protein serine/threonine phosphatase activity"/>
    <property type="evidence" value="ECO:0000318"/>
    <property type="project" value="GO_Central"/>
</dbReference>
<dbReference type="CDD" id="cd07414">
    <property type="entry name" value="MPP_PP1_PPKL"/>
    <property type="match status" value="1"/>
</dbReference>
<dbReference type="FunFam" id="3.60.21.10:FF:000026">
    <property type="entry name" value="Serine/threonine-protein phosphatase"/>
    <property type="match status" value="1"/>
</dbReference>
<dbReference type="Gene3D" id="3.60.21.10">
    <property type="match status" value="1"/>
</dbReference>
<dbReference type="InterPro" id="IPR004843">
    <property type="entry name" value="Calcineurin-like_PHP_ApaH"/>
</dbReference>
<dbReference type="InterPro" id="IPR029052">
    <property type="entry name" value="Metallo-depent_PP-like"/>
</dbReference>
<dbReference type="InterPro" id="IPR050341">
    <property type="entry name" value="PP1_catalytic_subunit"/>
</dbReference>
<dbReference type="InterPro" id="IPR006186">
    <property type="entry name" value="Ser/Thr-sp_prot-phosphatase"/>
</dbReference>
<dbReference type="InterPro" id="IPR031675">
    <property type="entry name" value="STPPase_N"/>
</dbReference>
<dbReference type="PANTHER" id="PTHR11668">
    <property type="entry name" value="SERINE/THREONINE PROTEIN PHOSPHATASE"/>
    <property type="match status" value="1"/>
</dbReference>
<dbReference type="PANTHER" id="PTHR11668:SF495">
    <property type="entry name" value="SERINE_THREONINE-PROTEIN PHOSPHATASE PP1"/>
    <property type="match status" value="1"/>
</dbReference>
<dbReference type="Pfam" id="PF00149">
    <property type="entry name" value="Metallophos"/>
    <property type="match status" value="1"/>
</dbReference>
<dbReference type="Pfam" id="PF16891">
    <property type="entry name" value="STPPase_N"/>
    <property type="match status" value="1"/>
</dbReference>
<dbReference type="PRINTS" id="PR00114">
    <property type="entry name" value="STPHPHTASE"/>
</dbReference>
<dbReference type="SMART" id="SM00156">
    <property type="entry name" value="PP2Ac"/>
    <property type="match status" value="1"/>
</dbReference>
<dbReference type="SUPFAM" id="SSF56300">
    <property type="entry name" value="Metallo-dependent phosphatases"/>
    <property type="match status" value="1"/>
</dbReference>
<dbReference type="PROSITE" id="PS00125">
    <property type="entry name" value="SER_THR_PHOSPHATASE"/>
    <property type="match status" value="1"/>
</dbReference>
<sequence>MDPALLDDVIRRLLEVKNLKPGKNAQLSESEIKQLCAAAKEIFLQQPNLLELEAPIKICGDVHGQYSDLLRLFDYGGYPPQANYLFLGDYVDRGKQSLETICLLLAYKVKYPENFFLLRGNHECASVNRIYGFYDECKRRFSVKLWKTFTDCFNCLPVSALIDEKILCMHGGLSPELNKLEQILNLNRPTDVPDTGLLCDLLWSDPSNEATGWAINDRGVSFTFGPDKVSEFLEKHDLDLICRAHQVVEDGYEFFASRQLVTIFSAPNYCGEFDNAGAMMSVDDTLMCSFQILKPARKMMGGSTNNKSGFKSFRGW</sequence>
<protein>
    <recommendedName>
        <fullName>Serine/threonine-protein phosphatase PP1</fullName>
        <ecNumber>3.1.3.16</ecNumber>
    </recommendedName>
</protein>
<name>PP1_MAIZE</name>
<evidence type="ECO:0000250" key="1"/>
<evidence type="ECO:0000305" key="2"/>
<proteinExistence type="evidence at transcript level"/>
<gene>
    <name type="primary">PP1</name>
</gene>
<feature type="chain" id="PRO_0000058808" description="Serine/threonine-protein phosphatase PP1">
    <location>
        <begin position="1"/>
        <end position="316"/>
    </location>
</feature>
<feature type="active site" description="Proton donor" evidence="1">
    <location>
        <position position="122"/>
    </location>
</feature>
<feature type="binding site" evidence="1">
    <location>
        <position position="61"/>
    </location>
    <ligand>
        <name>Mn(2+)</name>
        <dbReference type="ChEBI" id="CHEBI:29035"/>
        <label>1</label>
    </ligand>
</feature>
<feature type="binding site" evidence="1">
    <location>
        <position position="63"/>
    </location>
    <ligand>
        <name>Mn(2+)</name>
        <dbReference type="ChEBI" id="CHEBI:29035"/>
        <label>1</label>
    </ligand>
</feature>
<feature type="binding site" evidence="1">
    <location>
        <position position="89"/>
    </location>
    <ligand>
        <name>Mn(2+)</name>
        <dbReference type="ChEBI" id="CHEBI:29035"/>
        <label>1</label>
    </ligand>
</feature>
<feature type="binding site" evidence="1">
    <location>
        <position position="89"/>
    </location>
    <ligand>
        <name>Mn(2+)</name>
        <dbReference type="ChEBI" id="CHEBI:29035"/>
        <label>2</label>
    </ligand>
</feature>
<feature type="binding site" evidence="1">
    <location>
        <position position="121"/>
    </location>
    <ligand>
        <name>Mn(2+)</name>
        <dbReference type="ChEBI" id="CHEBI:29035"/>
        <label>2</label>
    </ligand>
</feature>
<feature type="binding site" evidence="1">
    <location>
        <position position="170"/>
    </location>
    <ligand>
        <name>Mn(2+)</name>
        <dbReference type="ChEBI" id="CHEBI:29035"/>
        <label>2</label>
    </ligand>
</feature>
<feature type="binding site" evidence="1">
    <location>
        <position position="245"/>
    </location>
    <ligand>
        <name>Mn(2+)</name>
        <dbReference type="ChEBI" id="CHEBI:29035"/>
        <label>2</label>
    </ligand>
</feature>
<reference key="1">
    <citation type="submission" date="1992-08" db="EMBL/GenBank/DDBJ databases">
        <authorList>
            <person name="Smith R.D."/>
            <person name="Walker J.C."/>
        </authorList>
    </citation>
    <scope>NUCLEOTIDE SEQUENCE [MRNA]</scope>
</reference>
<accession>P22198</accession>
<comment type="catalytic activity">
    <reaction>
        <text>O-phospho-L-seryl-[protein] + H2O = L-seryl-[protein] + phosphate</text>
        <dbReference type="Rhea" id="RHEA:20629"/>
        <dbReference type="Rhea" id="RHEA-COMP:9863"/>
        <dbReference type="Rhea" id="RHEA-COMP:11604"/>
        <dbReference type="ChEBI" id="CHEBI:15377"/>
        <dbReference type="ChEBI" id="CHEBI:29999"/>
        <dbReference type="ChEBI" id="CHEBI:43474"/>
        <dbReference type="ChEBI" id="CHEBI:83421"/>
        <dbReference type="EC" id="3.1.3.16"/>
    </reaction>
</comment>
<comment type="catalytic activity">
    <reaction>
        <text>O-phospho-L-threonyl-[protein] + H2O = L-threonyl-[protein] + phosphate</text>
        <dbReference type="Rhea" id="RHEA:47004"/>
        <dbReference type="Rhea" id="RHEA-COMP:11060"/>
        <dbReference type="Rhea" id="RHEA-COMP:11605"/>
        <dbReference type="ChEBI" id="CHEBI:15377"/>
        <dbReference type="ChEBI" id="CHEBI:30013"/>
        <dbReference type="ChEBI" id="CHEBI:43474"/>
        <dbReference type="ChEBI" id="CHEBI:61977"/>
        <dbReference type="EC" id="3.1.3.16"/>
    </reaction>
</comment>
<comment type="cofactor">
    <cofactor evidence="1">
        <name>Mn(2+)</name>
        <dbReference type="ChEBI" id="CHEBI:29035"/>
    </cofactor>
    <text evidence="1">Binds 2 manganese ions per subunit.</text>
</comment>
<comment type="similarity">
    <text evidence="2">Belongs to the PPP phosphatase family. PP-1 subfamily.</text>
</comment>
<keyword id="KW-0378">Hydrolase</keyword>
<keyword id="KW-0464">Manganese</keyword>
<keyword id="KW-0479">Metal-binding</keyword>
<keyword id="KW-0904">Protein phosphatase</keyword>
<keyword id="KW-1185">Reference proteome</keyword>
<organism>
    <name type="scientific">Zea mays</name>
    <name type="common">Maize</name>
    <dbReference type="NCBI Taxonomy" id="4577"/>
    <lineage>
        <taxon>Eukaryota</taxon>
        <taxon>Viridiplantae</taxon>
        <taxon>Streptophyta</taxon>
        <taxon>Embryophyta</taxon>
        <taxon>Tracheophyta</taxon>
        <taxon>Spermatophyta</taxon>
        <taxon>Magnoliopsida</taxon>
        <taxon>Liliopsida</taxon>
        <taxon>Poales</taxon>
        <taxon>Poaceae</taxon>
        <taxon>PACMAD clade</taxon>
        <taxon>Panicoideae</taxon>
        <taxon>Andropogonodae</taxon>
        <taxon>Andropogoneae</taxon>
        <taxon>Tripsacinae</taxon>
        <taxon>Zea</taxon>
    </lineage>
</organism>